<protein>
    <recommendedName>
        <fullName evidence="1">Protein NrdI</fullName>
    </recommendedName>
</protein>
<keyword id="KW-1185">Reference proteome</keyword>
<reference key="1">
    <citation type="journal article" date="2010" name="PLoS ONE">
        <title>Genome sequence of Cronobacter sakazakii BAA-894 and comparative genomic hybridization analysis with other Cronobacter species.</title>
        <authorList>
            <person name="Kucerova E."/>
            <person name="Clifton S.W."/>
            <person name="Xia X.Q."/>
            <person name="Long F."/>
            <person name="Porwollik S."/>
            <person name="Fulton L."/>
            <person name="Fronick C."/>
            <person name="Minx P."/>
            <person name="Kyung K."/>
            <person name="Warren W."/>
            <person name="Fulton R."/>
            <person name="Feng D."/>
            <person name="Wollam A."/>
            <person name="Shah N."/>
            <person name="Bhonagiri V."/>
            <person name="Nash W.E."/>
            <person name="Hallsworth-Pepin K."/>
            <person name="Wilson R.K."/>
            <person name="McClelland M."/>
            <person name="Forsythe S.J."/>
        </authorList>
    </citation>
    <scope>NUCLEOTIDE SEQUENCE [LARGE SCALE GENOMIC DNA]</scope>
    <source>
        <strain>ATCC BAA-894</strain>
    </source>
</reference>
<dbReference type="EMBL" id="CP000783">
    <property type="protein sequence ID" value="ABU75876.1"/>
    <property type="molecule type" value="Genomic_DNA"/>
</dbReference>
<dbReference type="RefSeq" id="WP_007870329.1">
    <property type="nucleotide sequence ID" value="NC_009778.1"/>
</dbReference>
<dbReference type="SMR" id="A7MI07"/>
<dbReference type="KEGG" id="esa:ESA_00592"/>
<dbReference type="HOGENOM" id="CLU_114845_0_0_6"/>
<dbReference type="Proteomes" id="UP000000260">
    <property type="component" value="Chromosome"/>
</dbReference>
<dbReference type="GO" id="GO:0010181">
    <property type="term" value="F:FMN binding"/>
    <property type="evidence" value="ECO:0007669"/>
    <property type="project" value="InterPro"/>
</dbReference>
<dbReference type="GO" id="GO:0036211">
    <property type="term" value="P:protein modification process"/>
    <property type="evidence" value="ECO:0007669"/>
    <property type="project" value="InterPro"/>
</dbReference>
<dbReference type="FunFam" id="3.40.50.360:FF:000005">
    <property type="entry name" value="Protein NrdI"/>
    <property type="match status" value="1"/>
</dbReference>
<dbReference type="Gene3D" id="3.40.50.360">
    <property type="match status" value="1"/>
</dbReference>
<dbReference type="HAMAP" id="MF_00128">
    <property type="entry name" value="NrdI"/>
    <property type="match status" value="1"/>
</dbReference>
<dbReference type="InterPro" id="IPR029039">
    <property type="entry name" value="Flavoprotein-like_sf"/>
</dbReference>
<dbReference type="InterPro" id="IPR020852">
    <property type="entry name" value="RNR_Ib_NrdI_bac"/>
</dbReference>
<dbReference type="InterPro" id="IPR004465">
    <property type="entry name" value="RNR_NrdI"/>
</dbReference>
<dbReference type="NCBIfam" id="TIGR00333">
    <property type="entry name" value="nrdI"/>
    <property type="match status" value="1"/>
</dbReference>
<dbReference type="PANTHER" id="PTHR37297">
    <property type="entry name" value="PROTEIN NRDI"/>
    <property type="match status" value="1"/>
</dbReference>
<dbReference type="PANTHER" id="PTHR37297:SF1">
    <property type="entry name" value="PROTEIN NRDI"/>
    <property type="match status" value="1"/>
</dbReference>
<dbReference type="Pfam" id="PF07972">
    <property type="entry name" value="Flavodoxin_NdrI"/>
    <property type="match status" value="1"/>
</dbReference>
<dbReference type="PIRSF" id="PIRSF005087">
    <property type="entry name" value="NrdI"/>
    <property type="match status" value="1"/>
</dbReference>
<dbReference type="SUPFAM" id="SSF52218">
    <property type="entry name" value="Flavoproteins"/>
    <property type="match status" value="1"/>
</dbReference>
<comment type="function">
    <text evidence="1">Probably involved in ribonucleotide reductase function.</text>
</comment>
<comment type="similarity">
    <text evidence="1">Belongs to the NrdI family.</text>
</comment>
<sequence>MTRLIYFSSRSENTHRFIARLGLPAARIPLEDRERLRADEPYILVVPTYGGGGTAGAVPRQVIRFLNDEHNRALLRGVIAAGNRNFGEGFCRAGDIIAHKCQVPFLYRFELMGTGQDIDNVRKGVSEFWQRQH</sequence>
<accession>A7MI07</accession>
<feature type="chain" id="PRO_1000016502" description="Protein NrdI">
    <location>
        <begin position="1"/>
        <end position="133"/>
    </location>
</feature>
<proteinExistence type="inferred from homology"/>
<gene>
    <name evidence="1" type="primary">nrdI</name>
    <name type="ordered locus">ESA_00592</name>
</gene>
<organism>
    <name type="scientific">Cronobacter sakazakii (strain ATCC BAA-894)</name>
    <name type="common">Enterobacter sakazakii</name>
    <dbReference type="NCBI Taxonomy" id="290339"/>
    <lineage>
        <taxon>Bacteria</taxon>
        <taxon>Pseudomonadati</taxon>
        <taxon>Pseudomonadota</taxon>
        <taxon>Gammaproteobacteria</taxon>
        <taxon>Enterobacterales</taxon>
        <taxon>Enterobacteriaceae</taxon>
        <taxon>Cronobacter</taxon>
    </lineage>
</organism>
<name>NRDI_CROS8</name>
<evidence type="ECO:0000255" key="1">
    <source>
        <dbReference type="HAMAP-Rule" id="MF_00128"/>
    </source>
</evidence>